<comment type="function">
    <text evidence="1">Regulatory subunit of a potassium efflux system that confers protection against electrophiles. Required for full activity of KefB.</text>
</comment>
<comment type="catalytic activity">
    <reaction evidence="1">
        <text>a quinone + NADH + H(+) = a quinol + NAD(+)</text>
        <dbReference type="Rhea" id="RHEA:46160"/>
        <dbReference type="ChEBI" id="CHEBI:15378"/>
        <dbReference type="ChEBI" id="CHEBI:24646"/>
        <dbReference type="ChEBI" id="CHEBI:57540"/>
        <dbReference type="ChEBI" id="CHEBI:57945"/>
        <dbReference type="ChEBI" id="CHEBI:132124"/>
        <dbReference type="EC" id="1.6.5.2"/>
    </reaction>
</comment>
<comment type="catalytic activity">
    <reaction evidence="1">
        <text>a quinone + NADPH + H(+) = a quinol + NADP(+)</text>
        <dbReference type="Rhea" id="RHEA:46164"/>
        <dbReference type="ChEBI" id="CHEBI:15378"/>
        <dbReference type="ChEBI" id="CHEBI:24646"/>
        <dbReference type="ChEBI" id="CHEBI:57783"/>
        <dbReference type="ChEBI" id="CHEBI:58349"/>
        <dbReference type="ChEBI" id="CHEBI:132124"/>
        <dbReference type="EC" id="1.6.5.2"/>
    </reaction>
</comment>
<comment type="subunit">
    <text evidence="1">Interacts with KefB.</text>
</comment>
<comment type="subcellular location">
    <subcellularLocation>
        <location evidence="1">Cell inner membrane</location>
        <topology evidence="1">Peripheral membrane protein</topology>
        <orientation evidence="1">Cytoplasmic side</orientation>
    </subcellularLocation>
</comment>
<comment type="similarity">
    <text evidence="1">Belongs to the NAD(P)H dehydrogenase (quinone) family. KefG subfamily.</text>
</comment>
<feature type="chain" id="PRO_1000068479" description="Glutathione-regulated potassium-efflux system ancillary protein KefG">
    <location>
        <begin position="1"/>
        <end position="184"/>
    </location>
</feature>
<reference key="1">
    <citation type="journal article" date="2006" name="Proc. Natl. Acad. Sci. U.S.A.">
        <title>Identification of genes subject to positive selection in uropathogenic strains of Escherichia coli: a comparative genomics approach.</title>
        <authorList>
            <person name="Chen S.L."/>
            <person name="Hung C.-S."/>
            <person name="Xu J."/>
            <person name="Reigstad C.S."/>
            <person name="Magrini V."/>
            <person name="Sabo A."/>
            <person name="Blasiar D."/>
            <person name="Bieri T."/>
            <person name="Meyer R.R."/>
            <person name="Ozersky P."/>
            <person name="Armstrong J.R."/>
            <person name="Fulton R.S."/>
            <person name="Latreille J.P."/>
            <person name="Spieth J."/>
            <person name="Hooton T.M."/>
            <person name="Mardis E.R."/>
            <person name="Hultgren S.J."/>
            <person name="Gordon J.I."/>
        </authorList>
    </citation>
    <scope>NUCLEOTIDE SEQUENCE [LARGE SCALE GENOMIC DNA]</scope>
    <source>
        <strain>UTI89 / UPEC</strain>
    </source>
</reference>
<name>KEFG_ECOUT</name>
<dbReference type="EC" id="1.6.5.2" evidence="1"/>
<dbReference type="EMBL" id="CP000243">
    <property type="protein sequence ID" value="ABE09283.1"/>
    <property type="molecule type" value="Genomic_DNA"/>
</dbReference>
<dbReference type="SMR" id="Q1R5T1"/>
<dbReference type="KEGG" id="eci:UTI89_C3854"/>
<dbReference type="HOGENOM" id="CLU_058643_0_1_6"/>
<dbReference type="Proteomes" id="UP000001952">
    <property type="component" value="Chromosome"/>
</dbReference>
<dbReference type="GO" id="GO:0005886">
    <property type="term" value="C:plasma membrane"/>
    <property type="evidence" value="ECO:0007669"/>
    <property type="project" value="UniProtKB-SubCell"/>
</dbReference>
<dbReference type="GO" id="GO:0009055">
    <property type="term" value="F:electron transfer activity"/>
    <property type="evidence" value="ECO:0007669"/>
    <property type="project" value="TreeGrafter"/>
</dbReference>
<dbReference type="GO" id="GO:0010181">
    <property type="term" value="F:FMN binding"/>
    <property type="evidence" value="ECO:0007669"/>
    <property type="project" value="TreeGrafter"/>
</dbReference>
<dbReference type="GO" id="GO:0050136">
    <property type="term" value="F:NADH:ubiquinone reductase (non-electrogenic) activity"/>
    <property type="evidence" value="ECO:0007669"/>
    <property type="project" value="RHEA"/>
</dbReference>
<dbReference type="GO" id="GO:0008753">
    <property type="term" value="F:NADPH dehydrogenase (quinone) activity"/>
    <property type="evidence" value="ECO:0007669"/>
    <property type="project" value="RHEA"/>
</dbReference>
<dbReference type="GO" id="GO:1901381">
    <property type="term" value="P:positive regulation of potassium ion transmembrane transport"/>
    <property type="evidence" value="ECO:0007669"/>
    <property type="project" value="UniProtKB-UniRule"/>
</dbReference>
<dbReference type="GO" id="GO:0006813">
    <property type="term" value="P:potassium ion transport"/>
    <property type="evidence" value="ECO:0007669"/>
    <property type="project" value="InterPro"/>
</dbReference>
<dbReference type="FunFam" id="3.40.50.360:FF:000013">
    <property type="entry name" value="Glutathione-regulated potassium-efflux system ancillary protein KefG"/>
    <property type="match status" value="1"/>
</dbReference>
<dbReference type="Gene3D" id="3.40.50.360">
    <property type="match status" value="1"/>
</dbReference>
<dbReference type="HAMAP" id="MF_01415">
    <property type="entry name" value="K_H_efflux_KefG"/>
    <property type="match status" value="1"/>
</dbReference>
<dbReference type="InterPro" id="IPR003680">
    <property type="entry name" value="Flavodoxin_fold"/>
</dbReference>
<dbReference type="InterPro" id="IPR029039">
    <property type="entry name" value="Flavoprotein-like_sf"/>
</dbReference>
<dbReference type="InterPro" id="IPR023947">
    <property type="entry name" value="K_H_efflux_KefG"/>
</dbReference>
<dbReference type="InterPro" id="IPR046980">
    <property type="entry name" value="KefG/KefF"/>
</dbReference>
<dbReference type="NCBIfam" id="NF003430">
    <property type="entry name" value="PRK04930.1"/>
    <property type="match status" value="1"/>
</dbReference>
<dbReference type="PANTHER" id="PTHR47307">
    <property type="entry name" value="GLUTATHIONE-REGULATED POTASSIUM-EFFLUX SYSTEM ANCILLARY PROTEIN KEFG"/>
    <property type="match status" value="1"/>
</dbReference>
<dbReference type="PANTHER" id="PTHR47307:SF1">
    <property type="entry name" value="GLUTATHIONE-REGULATED POTASSIUM-EFFLUX SYSTEM ANCILLARY PROTEIN KEFG"/>
    <property type="match status" value="1"/>
</dbReference>
<dbReference type="Pfam" id="PF02525">
    <property type="entry name" value="Flavodoxin_2"/>
    <property type="match status" value="1"/>
</dbReference>
<dbReference type="SUPFAM" id="SSF52218">
    <property type="entry name" value="Flavoproteins"/>
    <property type="match status" value="1"/>
</dbReference>
<proteinExistence type="inferred from homology"/>
<evidence type="ECO:0000255" key="1">
    <source>
        <dbReference type="HAMAP-Rule" id="MF_01415"/>
    </source>
</evidence>
<keyword id="KW-0997">Cell inner membrane</keyword>
<keyword id="KW-1003">Cell membrane</keyword>
<keyword id="KW-0472">Membrane</keyword>
<keyword id="KW-0520">NAD</keyword>
<keyword id="KW-0560">Oxidoreductase</keyword>
<organism>
    <name type="scientific">Escherichia coli (strain UTI89 / UPEC)</name>
    <dbReference type="NCBI Taxonomy" id="364106"/>
    <lineage>
        <taxon>Bacteria</taxon>
        <taxon>Pseudomonadati</taxon>
        <taxon>Pseudomonadota</taxon>
        <taxon>Gammaproteobacteria</taxon>
        <taxon>Enterobacterales</taxon>
        <taxon>Enterobacteriaceae</taxon>
        <taxon>Escherichia</taxon>
    </lineage>
</organism>
<gene>
    <name evidence="1" type="primary">kefG</name>
    <name type="ordered locus">UTI89_C3854</name>
</gene>
<protein>
    <recommendedName>
        <fullName evidence="1">Glutathione-regulated potassium-efflux system ancillary protein KefG</fullName>
    </recommendedName>
    <alternativeName>
        <fullName evidence="1">Putative quinone oxidoreductase KefG</fullName>
        <ecNumber evidence="1">1.6.5.2</ecNumber>
    </alternativeName>
</protein>
<accession>Q1R5T1</accession>
<sequence length="184" mass="20905">MMSQPAKVLLLYAHPESQDSVANRVLLKPATQLSNVTVHDLYAHYPDFFIDIPREQALLREHEVIVFQHPLYTYSCPALLKEWLDRVLSRGFASGPGGNQLAGKYWRSVITTGEPESAYRYDALNRYPMSDVLRPFELAAGMCRMHWLSPIIIYWARRQSAQELASHARAYGDWLANPLSPGGC</sequence>